<organism>
    <name type="scientific">Saccharomyces cerevisiae (strain ATCC 204508 / S288c)</name>
    <name type="common">Baker's yeast</name>
    <dbReference type="NCBI Taxonomy" id="559292"/>
    <lineage>
        <taxon>Eukaryota</taxon>
        <taxon>Fungi</taxon>
        <taxon>Dikarya</taxon>
        <taxon>Ascomycota</taxon>
        <taxon>Saccharomycotina</taxon>
        <taxon>Saccharomycetes</taxon>
        <taxon>Saccharomycetales</taxon>
        <taxon>Saccharomycetaceae</taxon>
        <taxon>Saccharomyces</taxon>
    </lineage>
</organism>
<gene>
    <name type="primary">RHO4</name>
    <name type="ordered locus">YKR055W</name>
</gene>
<proteinExistence type="evidence at protein level"/>
<name>RHO4_YEAST</name>
<evidence type="ECO:0000250" key="1"/>
<evidence type="ECO:0000250" key="2">
    <source>
        <dbReference type="UniProtKB" id="P61586"/>
    </source>
</evidence>
<evidence type="ECO:0000250" key="3">
    <source>
        <dbReference type="UniProtKB" id="P62745"/>
    </source>
</evidence>
<evidence type="ECO:0000256" key="4">
    <source>
        <dbReference type="SAM" id="MobiDB-lite"/>
    </source>
</evidence>
<evidence type="ECO:0000269" key="5">
    <source>
    </source>
</evidence>
<evidence type="ECO:0000269" key="6">
    <source>
    </source>
</evidence>
<evidence type="ECO:0000305" key="7"/>
<evidence type="ECO:0007744" key="8">
    <source>
    </source>
</evidence>
<evidence type="ECO:0007744" key="9">
    <source>
    </source>
</evidence>
<reference key="1">
    <citation type="journal article" date="1993" name="Yeast">
        <title>The RHO4a and NUD1 genes on Saccharomyces cerevisiae chromosome XI.</title>
        <authorList>
            <person name="van Vliet-Reedijk J.C."/>
            <person name="Planta R.J."/>
        </authorList>
    </citation>
    <scope>NUCLEOTIDE SEQUENCE [GENOMIC DNA]</scope>
    <source>
        <strain>ATCC 204508 / S288c</strain>
    </source>
</reference>
<reference key="2">
    <citation type="journal article" date="1992" name="Gene">
        <title>Isolation and characterization of two novel ras superfamily genes in Saccharomyces cerevisiae.</title>
        <authorList>
            <person name="Matsui Y."/>
            <person name="Toh-E A."/>
        </authorList>
    </citation>
    <scope>NUCLEOTIDE SEQUENCE [GENOMIC DNA] OF 62-291</scope>
    <source>
        <strain>ATCC 38626 / AH22 / NRRL Y-12843</strain>
    </source>
</reference>
<reference key="3">
    <citation type="journal article" date="1992" name="Nucleic Acids Res.">
        <title>Yeast RNC1 encodes a chimeric protein, RhoNUC, with a human rho motif and deoxyribonuclease activity.</title>
        <authorList>
            <person name="Chow T.Y.-K."/>
            <person name="Perkins E.L."/>
            <person name="Resnick M.A."/>
        </authorList>
    </citation>
    <scope>NUCLEOTIDE SEQUENCE [GENOMIC DNA]</scope>
    <scope>PROTEIN SEQUENCE OF 38-42</scope>
</reference>
<reference key="4">
    <citation type="journal article" date="1994" name="Nature">
        <title>Complete DNA sequence of yeast chromosome XI.</title>
        <authorList>
            <person name="Dujon B."/>
            <person name="Alexandraki D."/>
            <person name="Andre B."/>
            <person name="Ansorge W."/>
            <person name="Baladron V."/>
            <person name="Ballesta J.P.G."/>
            <person name="Banrevi A."/>
            <person name="Bolle P.-A."/>
            <person name="Bolotin-Fukuhara M."/>
            <person name="Bossier P."/>
            <person name="Bou G."/>
            <person name="Boyer J."/>
            <person name="Buitrago M.J."/>
            <person name="Cheret G."/>
            <person name="Colleaux L."/>
            <person name="Daignan-Fornier B."/>
            <person name="del Rey F."/>
            <person name="Dion C."/>
            <person name="Domdey H."/>
            <person name="Duesterhoeft A."/>
            <person name="Duesterhus S."/>
            <person name="Entian K.-D."/>
            <person name="Erfle H."/>
            <person name="Esteban P.F."/>
            <person name="Feldmann H."/>
            <person name="Fernandes L."/>
            <person name="Fobo G.M."/>
            <person name="Fritz C."/>
            <person name="Fukuhara H."/>
            <person name="Gabel C."/>
            <person name="Gaillon L."/>
            <person name="Garcia-Cantalejo J.M."/>
            <person name="Garcia-Ramirez J.J."/>
            <person name="Gent M.E."/>
            <person name="Ghazvini M."/>
            <person name="Goffeau A."/>
            <person name="Gonzalez A."/>
            <person name="Grothues D."/>
            <person name="Guerreiro P."/>
            <person name="Hegemann J.H."/>
            <person name="Hewitt N."/>
            <person name="Hilger F."/>
            <person name="Hollenberg C.P."/>
            <person name="Horaitis O."/>
            <person name="Indge K.J."/>
            <person name="Jacquier A."/>
            <person name="James C.M."/>
            <person name="Jauniaux J.-C."/>
            <person name="Jimenez A."/>
            <person name="Keuchel H."/>
            <person name="Kirchrath L."/>
            <person name="Kleine K."/>
            <person name="Koetter P."/>
            <person name="Legrain P."/>
            <person name="Liebl S."/>
            <person name="Louis E.J."/>
            <person name="Maia e Silva A."/>
            <person name="Marck C."/>
            <person name="Monnier A.-L."/>
            <person name="Moestl D."/>
            <person name="Mueller S."/>
            <person name="Obermaier B."/>
            <person name="Oliver S.G."/>
            <person name="Pallier C."/>
            <person name="Pascolo S."/>
            <person name="Pfeiffer F."/>
            <person name="Philippsen P."/>
            <person name="Planta R.J."/>
            <person name="Pohl F.M."/>
            <person name="Pohl T.M."/>
            <person name="Poehlmann R."/>
            <person name="Portetelle D."/>
            <person name="Purnelle B."/>
            <person name="Puzos V."/>
            <person name="Ramezani Rad M."/>
            <person name="Rasmussen S.W."/>
            <person name="Remacha M.A."/>
            <person name="Revuelta J.L."/>
            <person name="Richard G.-F."/>
            <person name="Rieger M."/>
            <person name="Rodrigues-Pousada C."/>
            <person name="Rose M."/>
            <person name="Rupp T."/>
            <person name="Santos M.A."/>
            <person name="Schwager C."/>
            <person name="Sensen C."/>
            <person name="Skala J."/>
            <person name="Soares H."/>
            <person name="Sor F."/>
            <person name="Stegemann J."/>
            <person name="Tettelin H."/>
            <person name="Thierry A."/>
            <person name="Tzermia M."/>
            <person name="Urrestarazu L.A."/>
            <person name="van Dyck L."/>
            <person name="van Vliet-Reedijk J.C."/>
            <person name="Valens M."/>
            <person name="Vandenbol M."/>
            <person name="Vilela C."/>
            <person name="Vissers S."/>
            <person name="von Wettstein D."/>
            <person name="Voss H."/>
            <person name="Wiemann S."/>
            <person name="Xu G."/>
            <person name="Zimmermann J."/>
            <person name="Haasemann M."/>
            <person name="Becker I."/>
            <person name="Mewes H.-W."/>
        </authorList>
    </citation>
    <scope>NUCLEOTIDE SEQUENCE [LARGE SCALE GENOMIC DNA]</scope>
    <source>
        <strain>ATCC 204508 / S288c</strain>
    </source>
</reference>
<reference key="5">
    <citation type="journal article" date="2014" name="G3 (Bethesda)">
        <title>The reference genome sequence of Saccharomyces cerevisiae: Then and now.</title>
        <authorList>
            <person name="Engel S.R."/>
            <person name="Dietrich F.S."/>
            <person name="Fisk D.G."/>
            <person name="Binkley G."/>
            <person name="Balakrishnan R."/>
            <person name="Costanzo M.C."/>
            <person name="Dwight S.S."/>
            <person name="Hitz B.C."/>
            <person name="Karra K."/>
            <person name="Nash R.S."/>
            <person name="Weng S."/>
            <person name="Wong E.D."/>
            <person name="Lloyd P."/>
            <person name="Skrzypek M.S."/>
            <person name="Miyasato S.R."/>
            <person name="Simison M."/>
            <person name="Cherry J.M."/>
        </authorList>
    </citation>
    <scope>GENOME REANNOTATION</scope>
    <source>
        <strain>ATCC 204508 / S288c</strain>
    </source>
</reference>
<reference key="6">
    <citation type="journal article" date="2007" name="Genome Res.">
        <title>Approaching a complete repository of sequence-verified protein-encoding clones for Saccharomyces cerevisiae.</title>
        <authorList>
            <person name="Hu Y."/>
            <person name="Rolfs A."/>
            <person name="Bhullar B."/>
            <person name="Murthy T.V.S."/>
            <person name="Zhu C."/>
            <person name="Berger M.F."/>
            <person name="Camargo A.A."/>
            <person name="Kelley F."/>
            <person name="McCarron S."/>
            <person name="Jepson D."/>
            <person name="Richardson A."/>
            <person name="Raphael J."/>
            <person name="Moreira D."/>
            <person name="Taycher E."/>
            <person name="Zuo D."/>
            <person name="Mohr S."/>
            <person name="Kane M.F."/>
            <person name="Williamson J."/>
            <person name="Simpson A.J.G."/>
            <person name="Bulyk M.L."/>
            <person name="Harlow E."/>
            <person name="Marsischky G."/>
            <person name="Kolodner R.D."/>
            <person name="LaBaer J."/>
        </authorList>
    </citation>
    <scope>NUCLEOTIDE SEQUENCE [GENOMIC DNA]</scope>
    <source>
        <strain>ATCC 204508 / S288c</strain>
    </source>
</reference>
<reference key="7">
    <citation type="journal article" date="1992" name="Mol. Cell. Biol.">
        <title>Yeast RHO3 and RHO4 ras superfamily genes are necessary for bud growth, and their defect is suppressed by a high dose of bud formation genes CDC42 and BEM1.</title>
        <authorList>
            <person name="Matsui Y."/>
            <person name="Toh-E A."/>
        </authorList>
    </citation>
    <scope>FUNCTION</scope>
</reference>
<reference key="8">
    <citation type="journal article" date="1996" name="Mol. Cell. Biol.">
        <title>Identification of the bud emergence gene BEM4 and its interactions with rho-type GTPases in Saccharomyces cerevisiae.</title>
        <authorList>
            <person name="Mack D."/>
            <person name="Nishimura K."/>
            <person name="Dennehey B.K."/>
            <person name="Arbogast T."/>
            <person name="Parkinson J."/>
            <person name="Toh-e A."/>
            <person name="Pringle J.R."/>
            <person name="Bender A."/>
            <person name="Matsui Y."/>
        </authorList>
    </citation>
    <scope>INTERACTION WITH BEM4</scope>
</reference>
<reference key="9">
    <citation type="journal article" date="2008" name="Mol. Cell. Proteomics">
        <title>A multidimensional chromatography technology for in-depth phosphoproteome analysis.</title>
        <authorList>
            <person name="Albuquerque C.P."/>
            <person name="Smolka M.B."/>
            <person name="Payne S.H."/>
            <person name="Bafna V."/>
            <person name="Eng J."/>
            <person name="Zhou H."/>
        </authorList>
    </citation>
    <scope>PHOSPHORYLATION [LARGE SCALE ANALYSIS] AT SER-276</scope>
    <scope>IDENTIFICATION BY MASS SPECTROMETRY [LARGE SCALE ANALYSIS]</scope>
</reference>
<reference key="10">
    <citation type="journal article" date="2009" name="Science">
        <title>Global analysis of Cdk1 substrate phosphorylation sites provides insights into evolution.</title>
        <authorList>
            <person name="Holt L.J."/>
            <person name="Tuch B.B."/>
            <person name="Villen J."/>
            <person name="Johnson A.D."/>
            <person name="Gygi S.P."/>
            <person name="Morgan D.O."/>
        </authorList>
    </citation>
    <scope>PHOSPHORYLATION [LARGE SCALE ANALYSIS] AT SER-264; SER-268 AND SER-276</scope>
    <scope>IDENTIFICATION BY MASS SPECTROMETRY [LARGE SCALE ANALYSIS]</scope>
</reference>
<keyword id="KW-1003">Cell membrane</keyword>
<keyword id="KW-0903">Direct protein sequencing</keyword>
<keyword id="KW-0342">GTP-binding</keyword>
<keyword id="KW-0378">Hydrolase</keyword>
<keyword id="KW-0449">Lipoprotein</keyword>
<keyword id="KW-0472">Membrane</keyword>
<keyword id="KW-0488">Methylation</keyword>
<keyword id="KW-0547">Nucleotide-binding</keyword>
<keyword id="KW-0597">Phosphoprotein</keyword>
<keyword id="KW-0636">Prenylation</keyword>
<keyword id="KW-1185">Reference proteome</keyword>
<accession>Q00246</accession>
<accession>D6VXB6</accession>
<accession>P30618</accession>
<dbReference type="EC" id="3.6.5.2" evidence="2"/>
<dbReference type="EMBL" id="Z25734">
    <property type="protein sequence ID" value="CAA81020.1"/>
    <property type="molecule type" value="Genomic_DNA"/>
</dbReference>
<dbReference type="EMBL" id="D10007">
    <property type="protein sequence ID" value="BAA00898.1"/>
    <property type="molecule type" value="Genomic_DNA"/>
</dbReference>
<dbReference type="EMBL" id="Z14126">
    <property type="protein sequence ID" value="CAA78500.1"/>
    <property type="status" value="ALT_FRAME"/>
    <property type="molecule type" value="Genomic_DNA"/>
</dbReference>
<dbReference type="EMBL" id="Z28280">
    <property type="protein sequence ID" value="CAA82133.1"/>
    <property type="molecule type" value="Genomic_DNA"/>
</dbReference>
<dbReference type="EMBL" id="AY557909">
    <property type="protein sequence ID" value="AAS56235.1"/>
    <property type="molecule type" value="Genomic_DNA"/>
</dbReference>
<dbReference type="EMBL" id="BK006944">
    <property type="protein sequence ID" value="DAA09206.1"/>
    <property type="molecule type" value="Genomic_DNA"/>
</dbReference>
<dbReference type="PIR" id="S37743">
    <property type="entry name" value="S37743"/>
</dbReference>
<dbReference type="RefSeq" id="NP_012981.3">
    <property type="nucleotide sequence ID" value="NM_001179845.3"/>
</dbReference>
<dbReference type="SMR" id="Q00246"/>
<dbReference type="BioGRID" id="34186">
    <property type="interactions" value="134"/>
</dbReference>
<dbReference type="DIP" id="DIP-755N"/>
<dbReference type="FunCoup" id="Q00246">
    <property type="interactions" value="207"/>
</dbReference>
<dbReference type="IntAct" id="Q00246">
    <property type="interactions" value="16"/>
</dbReference>
<dbReference type="MINT" id="Q00246"/>
<dbReference type="STRING" id="4932.YKR055W"/>
<dbReference type="iPTMnet" id="Q00246"/>
<dbReference type="PaxDb" id="4932-YKR055W"/>
<dbReference type="PeptideAtlas" id="Q00246"/>
<dbReference type="EnsemblFungi" id="YKR055W_mRNA">
    <property type="protein sequence ID" value="YKR055W"/>
    <property type="gene ID" value="YKR055W"/>
</dbReference>
<dbReference type="GeneID" id="853929"/>
<dbReference type="KEGG" id="sce:YKR055W"/>
<dbReference type="AGR" id="SGD:S000001763"/>
<dbReference type="SGD" id="S000001763">
    <property type="gene designation" value="RHO4"/>
</dbReference>
<dbReference type="VEuPathDB" id="FungiDB:YKR055W"/>
<dbReference type="eggNOG" id="KOG0393">
    <property type="taxonomic scope" value="Eukaryota"/>
</dbReference>
<dbReference type="GeneTree" id="ENSGT00940000172016"/>
<dbReference type="HOGENOM" id="CLU_041217_21_1_1"/>
<dbReference type="InParanoid" id="Q00246"/>
<dbReference type="OMA" id="GAFAHIQ"/>
<dbReference type="OrthoDB" id="4031310at2759"/>
<dbReference type="BioCyc" id="YEAST:G3O-32024-MONOMER"/>
<dbReference type="Reactome" id="R-SCE-416482">
    <property type="pathway name" value="G alpha (12/13) signalling events"/>
</dbReference>
<dbReference type="Reactome" id="R-SCE-5625740">
    <property type="pathway name" value="RHO GTPases activate PKNs"/>
</dbReference>
<dbReference type="Reactome" id="R-SCE-6798695">
    <property type="pathway name" value="Neutrophil degranulation"/>
</dbReference>
<dbReference type="Reactome" id="R-SCE-9013026">
    <property type="pathway name" value="RHOB GTPase cycle"/>
</dbReference>
<dbReference type="Reactome" id="R-SCE-9013106">
    <property type="pathway name" value="RHOC GTPase cycle"/>
</dbReference>
<dbReference type="Reactome" id="R-SCE-9013405">
    <property type="pathway name" value="RHOD GTPase cycle"/>
</dbReference>
<dbReference type="Reactome" id="R-SCE-9035034">
    <property type="pathway name" value="RHOF GTPase cycle"/>
</dbReference>
<dbReference type="Reactome" id="R-SCE-9696264">
    <property type="pathway name" value="RND3 GTPase cycle"/>
</dbReference>
<dbReference type="Reactome" id="R-SCE-9696270">
    <property type="pathway name" value="RND2 GTPase cycle"/>
</dbReference>
<dbReference type="Reactome" id="R-SCE-9696273">
    <property type="pathway name" value="RND1 GTPase cycle"/>
</dbReference>
<dbReference type="BioGRID-ORCS" id="853929">
    <property type="hits" value="0 hits in 10 CRISPR screens"/>
</dbReference>
<dbReference type="PRO" id="PR:Q00246"/>
<dbReference type="Proteomes" id="UP000002311">
    <property type="component" value="Chromosome XI"/>
</dbReference>
<dbReference type="RNAct" id="Q00246">
    <property type="molecule type" value="protein"/>
</dbReference>
<dbReference type="GO" id="GO:0071944">
    <property type="term" value="C:cell periphery"/>
    <property type="evidence" value="ECO:0007005"/>
    <property type="project" value="SGD"/>
</dbReference>
<dbReference type="GO" id="GO:0005935">
    <property type="term" value="C:cellular bud neck"/>
    <property type="evidence" value="ECO:0000314"/>
    <property type="project" value="SGD"/>
</dbReference>
<dbReference type="GO" id="GO:0005829">
    <property type="term" value="C:cytosol"/>
    <property type="evidence" value="ECO:0000318"/>
    <property type="project" value="GO_Central"/>
</dbReference>
<dbReference type="GO" id="GO:0005783">
    <property type="term" value="C:endoplasmic reticulum"/>
    <property type="evidence" value="ECO:0007005"/>
    <property type="project" value="SGD"/>
</dbReference>
<dbReference type="GO" id="GO:0000131">
    <property type="term" value="C:incipient cellular bud site"/>
    <property type="evidence" value="ECO:0000314"/>
    <property type="project" value="SGD"/>
</dbReference>
<dbReference type="GO" id="GO:0005886">
    <property type="term" value="C:plasma membrane"/>
    <property type="evidence" value="ECO:0000314"/>
    <property type="project" value="SGD"/>
</dbReference>
<dbReference type="GO" id="GO:0005525">
    <property type="term" value="F:GTP binding"/>
    <property type="evidence" value="ECO:0000318"/>
    <property type="project" value="GO_Central"/>
</dbReference>
<dbReference type="GO" id="GO:0003924">
    <property type="term" value="F:GTPase activity"/>
    <property type="evidence" value="ECO:0000314"/>
    <property type="project" value="SGD"/>
</dbReference>
<dbReference type="GO" id="GO:0019901">
    <property type="term" value="F:protein kinase binding"/>
    <property type="evidence" value="ECO:0000318"/>
    <property type="project" value="GO_Central"/>
</dbReference>
<dbReference type="GO" id="GO:0007015">
    <property type="term" value="P:actin filament organization"/>
    <property type="evidence" value="ECO:0000318"/>
    <property type="project" value="GO_Central"/>
</dbReference>
<dbReference type="GO" id="GO:0030011">
    <property type="term" value="P:maintenance of cell polarity"/>
    <property type="evidence" value="ECO:0000316"/>
    <property type="project" value="SGD"/>
</dbReference>
<dbReference type="GO" id="GO:0090338">
    <property type="term" value="P:positive regulation of formin-nucleated actin cable assembly"/>
    <property type="evidence" value="ECO:0000316"/>
    <property type="project" value="SGD"/>
</dbReference>
<dbReference type="GO" id="GO:0032956">
    <property type="term" value="P:regulation of actin cytoskeleton organization"/>
    <property type="evidence" value="ECO:0000318"/>
    <property type="project" value="GO_Central"/>
</dbReference>
<dbReference type="GO" id="GO:0090337">
    <property type="term" value="P:regulation of formin-nucleated actin cable assembly"/>
    <property type="evidence" value="ECO:0000353"/>
    <property type="project" value="SGD"/>
</dbReference>
<dbReference type="GO" id="GO:0007165">
    <property type="term" value="P:signal transduction"/>
    <property type="evidence" value="ECO:0000318"/>
    <property type="project" value="GO_Central"/>
</dbReference>
<dbReference type="GO" id="GO:0007264">
    <property type="term" value="P:small GTPase-mediated signal transduction"/>
    <property type="evidence" value="ECO:0007669"/>
    <property type="project" value="InterPro"/>
</dbReference>
<dbReference type="CDD" id="cd04132">
    <property type="entry name" value="Rho4_like"/>
    <property type="match status" value="1"/>
</dbReference>
<dbReference type="FunFam" id="3.40.50.300:FF:000983">
    <property type="entry name" value="Rho family GTPase"/>
    <property type="match status" value="1"/>
</dbReference>
<dbReference type="Gene3D" id="3.40.50.300">
    <property type="entry name" value="P-loop containing nucleotide triphosphate hydrolases"/>
    <property type="match status" value="1"/>
</dbReference>
<dbReference type="InterPro" id="IPR027417">
    <property type="entry name" value="P-loop_NTPase"/>
</dbReference>
<dbReference type="InterPro" id="IPR005225">
    <property type="entry name" value="Small_GTP-bd"/>
</dbReference>
<dbReference type="InterPro" id="IPR001806">
    <property type="entry name" value="Small_GTPase"/>
</dbReference>
<dbReference type="InterPro" id="IPR003578">
    <property type="entry name" value="Small_GTPase_Rho"/>
</dbReference>
<dbReference type="NCBIfam" id="TIGR00231">
    <property type="entry name" value="small_GTP"/>
    <property type="match status" value="1"/>
</dbReference>
<dbReference type="PANTHER" id="PTHR24072">
    <property type="entry name" value="RHO FAMILY GTPASE"/>
    <property type="match status" value="1"/>
</dbReference>
<dbReference type="Pfam" id="PF00071">
    <property type="entry name" value="Ras"/>
    <property type="match status" value="1"/>
</dbReference>
<dbReference type="PRINTS" id="PR00449">
    <property type="entry name" value="RASTRNSFRMNG"/>
</dbReference>
<dbReference type="SMART" id="SM00175">
    <property type="entry name" value="RAB"/>
    <property type="match status" value="1"/>
</dbReference>
<dbReference type="SMART" id="SM00176">
    <property type="entry name" value="RAN"/>
    <property type="match status" value="1"/>
</dbReference>
<dbReference type="SMART" id="SM00173">
    <property type="entry name" value="RAS"/>
    <property type="match status" value="1"/>
</dbReference>
<dbReference type="SMART" id="SM00174">
    <property type="entry name" value="RHO"/>
    <property type="match status" value="1"/>
</dbReference>
<dbReference type="SUPFAM" id="SSF52540">
    <property type="entry name" value="P-loop containing nucleoside triphosphate hydrolases"/>
    <property type="match status" value="1"/>
</dbReference>
<dbReference type="PROSITE" id="PS51420">
    <property type="entry name" value="RHO"/>
    <property type="match status" value="1"/>
</dbReference>
<protein>
    <recommendedName>
        <fullName>GTP-binding protein RHO4</fullName>
        <ecNumber evidence="2">3.6.5.2</ecNumber>
    </recommendedName>
</protein>
<feature type="chain" id="PRO_0000198948" description="GTP-binding protein RHO4">
    <location>
        <begin position="1"/>
        <end position="288"/>
    </location>
</feature>
<feature type="propeptide" id="PRO_0000281278" description="Removed in mature form" evidence="1">
    <location>
        <begin position="289"/>
        <end position="291"/>
    </location>
</feature>
<feature type="region of interest" description="Disordered" evidence="4">
    <location>
        <begin position="14"/>
        <end position="45"/>
    </location>
</feature>
<feature type="region of interest" description="Disordered" evidence="4">
    <location>
        <begin position="250"/>
        <end position="273"/>
    </location>
</feature>
<feature type="short sequence motif" description="Effector region" evidence="1">
    <location>
        <begin position="101"/>
        <end position="109"/>
    </location>
</feature>
<feature type="compositionally biased region" description="Polar residues" evidence="4">
    <location>
        <begin position="14"/>
        <end position="31"/>
    </location>
</feature>
<feature type="binding site" evidence="2">
    <location>
        <begin position="79"/>
        <end position="86"/>
    </location>
    <ligand>
        <name>GTP</name>
        <dbReference type="ChEBI" id="CHEBI:37565"/>
    </ligand>
</feature>
<feature type="binding site" evidence="1">
    <location>
        <begin position="127"/>
        <end position="131"/>
    </location>
    <ligand>
        <name>GTP</name>
        <dbReference type="ChEBI" id="CHEBI:37565"/>
    </ligand>
</feature>
<feature type="binding site" evidence="2">
    <location>
        <begin position="185"/>
        <end position="188"/>
    </location>
    <ligand>
        <name>GTP</name>
        <dbReference type="ChEBI" id="CHEBI:37565"/>
    </ligand>
</feature>
<feature type="modified residue" description="Phosphoserine" evidence="9">
    <location>
        <position position="264"/>
    </location>
</feature>
<feature type="modified residue" description="Phosphoserine" evidence="9">
    <location>
        <position position="268"/>
    </location>
</feature>
<feature type="modified residue" description="Phosphoserine" evidence="8 9">
    <location>
        <position position="276"/>
    </location>
</feature>
<feature type="modified residue" description="Cysteine methyl ester" evidence="3">
    <location>
        <position position="288"/>
    </location>
</feature>
<feature type="lipid moiety-binding region" description="S-farnesyl cysteine" evidence="1">
    <location>
        <position position="288"/>
    </location>
</feature>
<feature type="sequence conflict" description="In Ref. 3; CAA78500." evidence="7" ref="3">
    <original>PRLPTP</original>
    <variation>QIAYS</variation>
    <location>
        <begin position="43"/>
        <end position="48"/>
    </location>
</feature>
<feature type="sequence conflict" description="In Ref. 3; CAA78500." evidence="7" ref="3">
    <original>T</original>
    <variation>R</variation>
    <location>
        <position position="143"/>
    </location>
</feature>
<feature type="sequence conflict" description="In Ref. 3; AA sequence." evidence="7" ref="3">
    <original>PSSAESLAKRL</original>
    <variation>QVQQNPWPSVW</variation>
    <location>
        <begin position="201"/>
        <end position="211"/>
    </location>
</feature>
<feature type="sequence conflict" description="In Ref. 3; AA sequence." evidence="7" ref="3">
    <original>AFAHIQ</original>
    <variation>HLHIFK</variation>
    <location>
        <begin position="213"/>
        <end position="218"/>
    </location>
</feature>
<sequence length="291" mass="32186">MNTLLFKRKGGNCGNESNIVSQGSPSSSNLPESPGTLDEKNLPRLPTPFARSLSTIPSYEQMKRTNKLPDYHLKIVVVGDGAVGKTCLLISYVQGTFPTDYIPTIFENYVTNIEGPNGQIIELALWDTAGQEEYSRLRPLSYTNADVLMVCYSVGSKTSLKNVEDLWFPEVKHFCPSTPIMLVGLKSDLYEADNLSDLVEPSSAESLAKRLGAFAHIQCSARLKENIDEVFETAIHTLLSDSLYAPREPTHTIKNPFKRNTTRSDIDSSTGDTSVSISGTKRLRKNKCIIM</sequence>
<comment type="function">
    <text evidence="5">Plays an important role in cell growth. Required to keep the uninucleated state. May be involved in the organization of the cytoskeleton which affects microtubule functions. Most likely RHO3 and RHO4 of S.cerevisiae regulate partially overlapping but different pathways.</text>
</comment>
<comment type="catalytic activity">
    <reaction evidence="2">
        <text>GTP + H2O = GDP + phosphate + H(+)</text>
        <dbReference type="Rhea" id="RHEA:19669"/>
        <dbReference type="ChEBI" id="CHEBI:15377"/>
        <dbReference type="ChEBI" id="CHEBI:15378"/>
        <dbReference type="ChEBI" id="CHEBI:37565"/>
        <dbReference type="ChEBI" id="CHEBI:43474"/>
        <dbReference type="ChEBI" id="CHEBI:58189"/>
        <dbReference type="EC" id="3.6.5.2"/>
    </reaction>
    <physiologicalReaction direction="left-to-right" evidence="2">
        <dbReference type="Rhea" id="RHEA:19670"/>
    </physiologicalReaction>
</comment>
<comment type="subunit">
    <text evidence="6">Interacts with BEM4.</text>
</comment>
<comment type="subcellular location">
    <subcellularLocation>
        <location evidence="7">Cell membrane</location>
        <topology evidence="7">Lipid-anchor</topology>
        <orientation evidence="7">Cytoplasmic side</orientation>
    </subcellularLocation>
</comment>
<comment type="similarity">
    <text evidence="7">Belongs to the small GTPase superfamily. Rho family.</text>
</comment>
<comment type="sequence caution" evidence="7">
    <conflict type="frameshift">
        <sequence resource="EMBL-CDS" id="CAA78500"/>
    </conflict>
    <text>Leads to a fusion with RNC1.</text>
</comment>